<organism>
    <name type="scientific">Mus musculus</name>
    <name type="common">Mouse</name>
    <dbReference type="NCBI Taxonomy" id="10090"/>
    <lineage>
        <taxon>Eukaryota</taxon>
        <taxon>Metazoa</taxon>
        <taxon>Chordata</taxon>
        <taxon>Craniata</taxon>
        <taxon>Vertebrata</taxon>
        <taxon>Euteleostomi</taxon>
        <taxon>Mammalia</taxon>
        <taxon>Eutheria</taxon>
        <taxon>Euarchontoglires</taxon>
        <taxon>Glires</taxon>
        <taxon>Rodentia</taxon>
        <taxon>Myomorpha</taxon>
        <taxon>Muroidea</taxon>
        <taxon>Muridae</taxon>
        <taxon>Murinae</taxon>
        <taxon>Mus</taxon>
        <taxon>Mus</taxon>
    </lineage>
</organism>
<accession>Q8CC36</accession>
<keyword id="KW-1015">Disulfide bond</keyword>
<keyword id="KW-0339">Growth factor</keyword>
<keyword id="KW-1185">Reference proteome</keyword>
<keyword id="KW-0964">Secreted</keyword>
<keyword id="KW-0732">Signal</keyword>
<dbReference type="EMBL" id="AK034009">
    <property type="protein sequence ID" value="BAC28545.1"/>
    <property type="molecule type" value="mRNA"/>
</dbReference>
<dbReference type="EMBL" id="AL732620">
    <property type="status" value="NOT_ANNOTATED_CDS"/>
    <property type="molecule type" value="Genomic_DNA"/>
</dbReference>
<dbReference type="EMBL" id="AL929080">
    <property type="status" value="NOT_ANNOTATED_CDS"/>
    <property type="molecule type" value="Genomic_DNA"/>
</dbReference>
<dbReference type="EMBL" id="BC110560">
    <property type="protein sequence ID" value="AAI10561.1"/>
    <property type="molecule type" value="mRNA"/>
</dbReference>
<dbReference type="CCDS" id="CCDS15654.1"/>
<dbReference type="RefSeq" id="NP_808315.1">
    <property type="nucleotide sequence ID" value="NM_177647.4"/>
</dbReference>
<dbReference type="SMR" id="Q8CC36"/>
<dbReference type="FunCoup" id="Q8CC36">
    <property type="interactions" value="142"/>
</dbReference>
<dbReference type="STRING" id="10090.ENSMUSP00000046297"/>
<dbReference type="PhosphoSitePlus" id="Q8CC36"/>
<dbReference type="jPOST" id="Q8CC36"/>
<dbReference type="PaxDb" id="10090-ENSMUSP00000046297"/>
<dbReference type="PeptideAtlas" id="Q8CC36"/>
<dbReference type="ProteomicsDB" id="281442"/>
<dbReference type="Antibodypedia" id="24933">
    <property type="antibodies" value="302 antibodies from 32 providers"/>
</dbReference>
<dbReference type="DNASU" id="227526"/>
<dbReference type="Ensembl" id="ENSMUST00000036350.3">
    <property type="protein sequence ID" value="ENSMUSP00000046297.3"/>
    <property type="gene ID" value="ENSMUSG00000039496.9"/>
</dbReference>
<dbReference type="GeneID" id="227526"/>
<dbReference type="KEGG" id="mmu:227526"/>
<dbReference type="UCSC" id="uc008iej.1">
    <property type="organism name" value="mouse"/>
</dbReference>
<dbReference type="AGR" id="MGI:3606576"/>
<dbReference type="CTD" id="441549"/>
<dbReference type="MGI" id="MGI:3606576">
    <property type="gene designation" value="Cdnf"/>
</dbReference>
<dbReference type="VEuPathDB" id="HostDB:ENSMUSG00000039496"/>
<dbReference type="eggNOG" id="KOG4154">
    <property type="taxonomic scope" value="Eukaryota"/>
</dbReference>
<dbReference type="GeneTree" id="ENSGT00390000007160"/>
<dbReference type="HOGENOM" id="CLU_099080_1_0_1"/>
<dbReference type="InParanoid" id="Q8CC36"/>
<dbReference type="OMA" id="DSWGEVC"/>
<dbReference type="OrthoDB" id="5597848at2759"/>
<dbReference type="PhylomeDB" id="Q8CC36"/>
<dbReference type="TreeFam" id="TF314252"/>
<dbReference type="BioGRID-ORCS" id="227526">
    <property type="hits" value="2 hits in 76 CRISPR screens"/>
</dbReference>
<dbReference type="PRO" id="PR:Q8CC36"/>
<dbReference type="Proteomes" id="UP000000589">
    <property type="component" value="Chromosome 2"/>
</dbReference>
<dbReference type="RNAct" id="Q8CC36">
    <property type="molecule type" value="protein"/>
</dbReference>
<dbReference type="Bgee" id="ENSMUSG00000039496">
    <property type="expression patterns" value="Expressed in quadriceps femoris and 53 other cell types or tissues"/>
</dbReference>
<dbReference type="GO" id="GO:0005576">
    <property type="term" value="C:extracellular region"/>
    <property type="evidence" value="ECO:0007669"/>
    <property type="project" value="UniProtKB-SubCell"/>
</dbReference>
<dbReference type="GO" id="GO:0008083">
    <property type="term" value="F:growth factor activity"/>
    <property type="evidence" value="ECO:0007669"/>
    <property type="project" value="UniProtKB-KW"/>
</dbReference>
<dbReference type="FunFam" id="1.10.225.10:FF:000003">
    <property type="entry name" value="Mesencephalic astrocyte-derived neurotrophic factor"/>
    <property type="match status" value="1"/>
</dbReference>
<dbReference type="FunFam" id="1.10.720.30:FF:000003">
    <property type="entry name" value="Mesencephalic astrocyte-derived neurotrophic factor"/>
    <property type="match status" value="1"/>
</dbReference>
<dbReference type="Gene3D" id="1.10.720.30">
    <property type="entry name" value="SAP domain"/>
    <property type="match status" value="1"/>
</dbReference>
<dbReference type="Gene3D" id="1.10.225.10">
    <property type="entry name" value="Saposin-like"/>
    <property type="match status" value="1"/>
</dbReference>
<dbReference type="InterPro" id="IPR045333">
    <property type="entry name" value="ARMET-like"/>
</dbReference>
<dbReference type="InterPro" id="IPR019345">
    <property type="entry name" value="ARMET_C"/>
</dbReference>
<dbReference type="InterPro" id="IPR045332">
    <property type="entry name" value="ARMET_N"/>
</dbReference>
<dbReference type="InterPro" id="IPR036361">
    <property type="entry name" value="SAP_dom_sf"/>
</dbReference>
<dbReference type="PANTHER" id="PTHR12990">
    <property type="entry name" value="ARMET-LIKE PROTEIN"/>
    <property type="match status" value="1"/>
</dbReference>
<dbReference type="PANTHER" id="PTHR12990:SF9">
    <property type="entry name" value="CEREBRAL DOPAMINE NEUROTROPHIC FACTOR"/>
    <property type="match status" value="1"/>
</dbReference>
<dbReference type="Pfam" id="PF10208">
    <property type="entry name" value="ARMET_C"/>
    <property type="match status" value="1"/>
</dbReference>
<dbReference type="Pfam" id="PF20145">
    <property type="entry name" value="ARMET_N"/>
    <property type="match status" value="1"/>
</dbReference>
<dbReference type="SUPFAM" id="SSF68906">
    <property type="entry name" value="SAP domain"/>
    <property type="match status" value="1"/>
</dbReference>
<gene>
    <name type="primary">Cdnf</name>
    <name type="synonym">Armetl1</name>
</gene>
<reference key="1">
    <citation type="journal article" date="2005" name="Science">
        <title>The transcriptional landscape of the mammalian genome.</title>
        <authorList>
            <person name="Carninci P."/>
            <person name="Kasukawa T."/>
            <person name="Katayama S."/>
            <person name="Gough J."/>
            <person name="Frith M.C."/>
            <person name="Maeda N."/>
            <person name="Oyama R."/>
            <person name="Ravasi T."/>
            <person name="Lenhard B."/>
            <person name="Wells C."/>
            <person name="Kodzius R."/>
            <person name="Shimokawa K."/>
            <person name="Bajic V.B."/>
            <person name="Brenner S.E."/>
            <person name="Batalov S."/>
            <person name="Forrest A.R."/>
            <person name="Zavolan M."/>
            <person name="Davis M.J."/>
            <person name="Wilming L.G."/>
            <person name="Aidinis V."/>
            <person name="Allen J.E."/>
            <person name="Ambesi-Impiombato A."/>
            <person name="Apweiler R."/>
            <person name="Aturaliya R.N."/>
            <person name="Bailey T.L."/>
            <person name="Bansal M."/>
            <person name="Baxter L."/>
            <person name="Beisel K.W."/>
            <person name="Bersano T."/>
            <person name="Bono H."/>
            <person name="Chalk A.M."/>
            <person name="Chiu K.P."/>
            <person name="Choudhary V."/>
            <person name="Christoffels A."/>
            <person name="Clutterbuck D.R."/>
            <person name="Crowe M.L."/>
            <person name="Dalla E."/>
            <person name="Dalrymple B.P."/>
            <person name="de Bono B."/>
            <person name="Della Gatta G."/>
            <person name="di Bernardo D."/>
            <person name="Down T."/>
            <person name="Engstrom P."/>
            <person name="Fagiolini M."/>
            <person name="Faulkner G."/>
            <person name="Fletcher C.F."/>
            <person name="Fukushima T."/>
            <person name="Furuno M."/>
            <person name="Futaki S."/>
            <person name="Gariboldi M."/>
            <person name="Georgii-Hemming P."/>
            <person name="Gingeras T.R."/>
            <person name="Gojobori T."/>
            <person name="Green R.E."/>
            <person name="Gustincich S."/>
            <person name="Harbers M."/>
            <person name="Hayashi Y."/>
            <person name="Hensch T.K."/>
            <person name="Hirokawa N."/>
            <person name="Hill D."/>
            <person name="Huminiecki L."/>
            <person name="Iacono M."/>
            <person name="Ikeo K."/>
            <person name="Iwama A."/>
            <person name="Ishikawa T."/>
            <person name="Jakt M."/>
            <person name="Kanapin A."/>
            <person name="Katoh M."/>
            <person name="Kawasawa Y."/>
            <person name="Kelso J."/>
            <person name="Kitamura H."/>
            <person name="Kitano H."/>
            <person name="Kollias G."/>
            <person name="Krishnan S.P."/>
            <person name="Kruger A."/>
            <person name="Kummerfeld S.K."/>
            <person name="Kurochkin I.V."/>
            <person name="Lareau L.F."/>
            <person name="Lazarevic D."/>
            <person name="Lipovich L."/>
            <person name="Liu J."/>
            <person name="Liuni S."/>
            <person name="McWilliam S."/>
            <person name="Madan Babu M."/>
            <person name="Madera M."/>
            <person name="Marchionni L."/>
            <person name="Matsuda H."/>
            <person name="Matsuzawa S."/>
            <person name="Miki H."/>
            <person name="Mignone F."/>
            <person name="Miyake S."/>
            <person name="Morris K."/>
            <person name="Mottagui-Tabar S."/>
            <person name="Mulder N."/>
            <person name="Nakano N."/>
            <person name="Nakauchi H."/>
            <person name="Ng P."/>
            <person name="Nilsson R."/>
            <person name="Nishiguchi S."/>
            <person name="Nishikawa S."/>
            <person name="Nori F."/>
            <person name="Ohara O."/>
            <person name="Okazaki Y."/>
            <person name="Orlando V."/>
            <person name="Pang K.C."/>
            <person name="Pavan W.J."/>
            <person name="Pavesi G."/>
            <person name="Pesole G."/>
            <person name="Petrovsky N."/>
            <person name="Piazza S."/>
            <person name="Reed J."/>
            <person name="Reid J.F."/>
            <person name="Ring B.Z."/>
            <person name="Ringwald M."/>
            <person name="Rost B."/>
            <person name="Ruan Y."/>
            <person name="Salzberg S.L."/>
            <person name="Sandelin A."/>
            <person name="Schneider C."/>
            <person name="Schoenbach C."/>
            <person name="Sekiguchi K."/>
            <person name="Semple C.A."/>
            <person name="Seno S."/>
            <person name="Sessa L."/>
            <person name="Sheng Y."/>
            <person name="Shibata Y."/>
            <person name="Shimada H."/>
            <person name="Shimada K."/>
            <person name="Silva D."/>
            <person name="Sinclair B."/>
            <person name="Sperling S."/>
            <person name="Stupka E."/>
            <person name="Sugiura K."/>
            <person name="Sultana R."/>
            <person name="Takenaka Y."/>
            <person name="Taki K."/>
            <person name="Tammoja K."/>
            <person name="Tan S.L."/>
            <person name="Tang S."/>
            <person name="Taylor M.S."/>
            <person name="Tegner J."/>
            <person name="Teichmann S.A."/>
            <person name="Ueda H.R."/>
            <person name="van Nimwegen E."/>
            <person name="Verardo R."/>
            <person name="Wei C.L."/>
            <person name="Yagi K."/>
            <person name="Yamanishi H."/>
            <person name="Zabarovsky E."/>
            <person name="Zhu S."/>
            <person name="Zimmer A."/>
            <person name="Hide W."/>
            <person name="Bult C."/>
            <person name="Grimmond S.M."/>
            <person name="Teasdale R.D."/>
            <person name="Liu E.T."/>
            <person name="Brusic V."/>
            <person name="Quackenbush J."/>
            <person name="Wahlestedt C."/>
            <person name="Mattick J.S."/>
            <person name="Hume D.A."/>
            <person name="Kai C."/>
            <person name="Sasaki D."/>
            <person name="Tomaru Y."/>
            <person name="Fukuda S."/>
            <person name="Kanamori-Katayama M."/>
            <person name="Suzuki M."/>
            <person name="Aoki J."/>
            <person name="Arakawa T."/>
            <person name="Iida J."/>
            <person name="Imamura K."/>
            <person name="Itoh M."/>
            <person name="Kato T."/>
            <person name="Kawaji H."/>
            <person name="Kawagashira N."/>
            <person name="Kawashima T."/>
            <person name="Kojima M."/>
            <person name="Kondo S."/>
            <person name="Konno H."/>
            <person name="Nakano K."/>
            <person name="Ninomiya N."/>
            <person name="Nishio T."/>
            <person name="Okada M."/>
            <person name="Plessy C."/>
            <person name="Shibata K."/>
            <person name="Shiraki T."/>
            <person name="Suzuki S."/>
            <person name="Tagami M."/>
            <person name="Waki K."/>
            <person name="Watahiki A."/>
            <person name="Okamura-Oho Y."/>
            <person name="Suzuki H."/>
            <person name="Kawai J."/>
            <person name="Hayashizaki Y."/>
        </authorList>
    </citation>
    <scope>NUCLEOTIDE SEQUENCE [LARGE SCALE MRNA]</scope>
    <source>
        <strain>C57BL/6J</strain>
        <tissue>Diencephalon</tissue>
    </source>
</reference>
<reference key="2">
    <citation type="journal article" date="2009" name="PLoS Biol.">
        <title>Lineage-specific biology revealed by a finished genome assembly of the mouse.</title>
        <authorList>
            <person name="Church D.M."/>
            <person name="Goodstadt L."/>
            <person name="Hillier L.W."/>
            <person name="Zody M.C."/>
            <person name="Goldstein S."/>
            <person name="She X."/>
            <person name="Bult C.J."/>
            <person name="Agarwala R."/>
            <person name="Cherry J.L."/>
            <person name="DiCuccio M."/>
            <person name="Hlavina W."/>
            <person name="Kapustin Y."/>
            <person name="Meric P."/>
            <person name="Maglott D."/>
            <person name="Birtle Z."/>
            <person name="Marques A.C."/>
            <person name="Graves T."/>
            <person name="Zhou S."/>
            <person name="Teague B."/>
            <person name="Potamousis K."/>
            <person name="Churas C."/>
            <person name="Place M."/>
            <person name="Herschleb J."/>
            <person name="Runnheim R."/>
            <person name="Forrest D."/>
            <person name="Amos-Landgraf J."/>
            <person name="Schwartz D.C."/>
            <person name="Cheng Z."/>
            <person name="Lindblad-Toh K."/>
            <person name="Eichler E.E."/>
            <person name="Ponting C.P."/>
        </authorList>
    </citation>
    <scope>NUCLEOTIDE SEQUENCE [LARGE SCALE GENOMIC DNA]</scope>
    <source>
        <strain>C57BL/6J</strain>
    </source>
</reference>
<reference key="3">
    <citation type="journal article" date="2004" name="Genome Res.">
        <title>The status, quality, and expansion of the NIH full-length cDNA project: the Mammalian Gene Collection (MGC).</title>
        <authorList>
            <consortium name="The MGC Project Team"/>
        </authorList>
    </citation>
    <scope>NUCLEOTIDE SEQUENCE [LARGE SCALE MRNA]</scope>
</reference>
<reference key="4">
    <citation type="journal article" date="2007" name="Nature">
        <title>Novel neurotrophic factor CDNF protects and rescues midbrain dopamine neurons in vivo.</title>
        <authorList>
            <person name="Lindholm P."/>
            <person name="Voutilainen M.H."/>
            <person name="Lauren J."/>
            <person name="Peraenen J."/>
            <person name="Leppaenen V.-M."/>
            <person name="Andressoo J.-O."/>
            <person name="Lindahl M."/>
            <person name="Janhunen S."/>
            <person name="Kalkkinen N."/>
            <person name="Timmusk T."/>
            <person name="Tuominen R.K."/>
            <person name="Saarma M."/>
        </authorList>
    </citation>
    <scope>SUBCELLULAR LOCATION</scope>
    <scope>TISSUE SPECIFICITY</scope>
    <scope>DEVELOPMENTAL STAGE</scope>
</reference>
<reference key="5">
    <citation type="journal article" date="2010" name="Cell">
        <title>A tissue-specific atlas of mouse protein phosphorylation and expression.</title>
        <authorList>
            <person name="Huttlin E.L."/>
            <person name="Jedrychowski M.P."/>
            <person name="Elias J.E."/>
            <person name="Goswami T."/>
            <person name="Rad R."/>
            <person name="Beausoleil S.A."/>
            <person name="Villen J."/>
            <person name="Haas W."/>
            <person name="Sowa M.E."/>
            <person name="Gygi S.P."/>
        </authorList>
    </citation>
    <scope>IDENTIFICATION BY MASS SPECTROMETRY [LARGE SCALE ANALYSIS]</scope>
    <source>
        <tissue>Heart</tissue>
        <tissue>Testis</tissue>
    </source>
</reference>
<feature type="signal peptide" evidence="2">
    <location>
        <begin position="1"/>
        <end position="24"/>
    </location>
</feature>
<feature type="chain" id="PRO_0000281138" description="Cerebral dopamine neurotrophic factor">
    <location>
        <begin position="25"/>
        <end position="187"/>
    </location>
</feature>
<feature type="disulfide bond" evidence="1">
    <location>
        <begin position="37"/>
        <end position="124"/>
    </location>
</feature>
<feature type="disulfide bond" evidence="1">
    <location>
        <begin position="40"/>
        <end position="113"/>
    </location>
</feature>
<feature type="disulfide bond" evidence="1">
    <location>
        <begin position="71"/>
        <end position="82"/>
    </location>
</feature>
<proteinExistence type="evidence at protein level"/>
<sequence>MRCISPTALVTFCAGFCISNPVLAQGLEAGVGPRADCEVCKEFLDRFYNSLLSRGIDFSADTIEKELLNFCSDAKGKENRLCYYLGATTDAATKILGEVTRPMSVHIPAVKICEKLKKMDSQICELKYGKKLDLASVDLWKMRVAELKQILQRWGEECRACAEKSDYVNLIRELAPKYVEIYPQTEL</sequence>
<evidence type="ECO:0000250" key="1"/>
<evidence type="ECO:0000255" key="2"/>
<evidence type="ECO:0000269" key="3">
    <source>
    </source>
</evidence>
<evidence type="ECO:0000305" key="4"/>
<comment type="function">
    <text evidence="1">Trophic factor for dopamine neurons. Prevents the 6-hydroxydopamine (6-OHDA)-induced degeneration of dopaminergic neurons. When administered after 6-OHDA-lesioning, restores the dopaminergic function and prevents the degeneration of dopaminergic neurons in substantia nigra (By similarity).</text>
</comment>
<comment type="subcellular location">
    <subcellularLocation>
        <location evidence="3">Secreted</location>
    </subcellularLocation>
</comment>
<comment type="tissue specificity">
    <text evidence="3">Expressed at high levels in the heart, skeletal muscle, testis and brain (at protein level). In the brain, detected in the cerebral cortex neurons through layers II to VI. In the hippocampus, detected in the CA1 to CA3 pyramidal regions and in the granule and polymorph layers of dentate gyrus. Weak expression in the striatum. In substantia nigra, detected in solitary cells that did not express tyrosine hydroxylase, a marker for dopaminergic neurons. Relatively high expression in the Purkinje cells of the cerebellum and in regions of the brain stem, including the locus coeruleus.</text>
</comment>
<comment type="developmental stage">
    <text evidence="3">At postnatal stage P1 and P10, expressed in the brain, including the hippocampus, thalamus, striatum and substantia nigra. Highest levels in the hippocampus and thalamus.</text>
</comment>
<comment type="similarity">
    <text evidence="4">Belongs to the ARMET family.</text>
</comment>
<name>CDNF_MOUSE</name>
<protein>
    <recommendedName>
        <fullName>Cerebral dopamine neurotrophic factor</fullName>
    </recommendedName>
    <alternativeName>
        <fullName>ARMET-like protein 1</fullName>
    </alternativeName>
    <alternativeName>
        <fullName>Conserved dopamine neurotrophic factor</fullName>
    </alternativeName>
</protein>